<keyword id="KW-1185">Reference proteome</keyword>
<keyword id="KW-0964">Secreted</keyword>
<keyword id="KW-0843">Virulence</keyword>
<accession>P9WIG7</accession>
<accession>L0TGV1</accession>
<accession>Q79F93</accession>
<accession>Q8VIR8</accession>
<dbReference type="EMBL" id="AL123456">
    <property type="protein sequence ID" value="CCP46701.1"/>
    <property type="molecule type" value="Genomic_DNA"/>
</dbReference>
<dbReference type="PIR" id="F70802">
    <property type="entry name" value="F70802"/>
</dbReference>
<dbReference type="RefSeq" id="WP_003912361.1">
    <property type="nucleotide sequence ID" value="NZ_NVQJ01000074.1"/>
</dbReference>
<dbReference type="RefSeq" id="YP_178021.1">
    <property type="nucleotide sequence ID" value="NC_000962.3"/>
</dbReference>
<dbReference type="SMR" id="P9WIG7"/>
<dbReference type="IntAct" id="P9WIG7">
    <property type="interactions" value="2"/>
</dbReference>
<dbReference type="MINT" id="P9WIG7"/>
<dbReference type="STRING" id="83332.Rv3872"/>
<dbReference type="PaxDb" id="83332-Rv3872"/>
<dbReference type="DNASU" id="886191"/>
<dbReference type="GeneID" id="886191"/>
<dbReference type="KEGG" id="mtu:Rv3872"/>
<dbReference type="KEGG" id="mtv:RVBD_3872"/>
<dbReference type="TubercuList" id="Rv3872"/>
<dbReference type="eggNOG" id="ENOG5031UUI">
    <property type="taxonomic scope" value="Bacteria"/>
</dbReference>
<dbReference type="InParanoid" id="P9WIG7"/>
<dbReference type="OrthoDB" id="4753420at2"/>
<dbReference type="PhylomeDB" id="P9WIG7"/>
<dbReference type="Proteomes" id="UP000001584">
    <property type="component" value="Chromosome"/>
</dbReference>
<dbReference type="GO" id="GO:0009986">
    <property type="term" value="C:cell surface"/>
    <property type="evidence" value="ECO:0007669"/>
    <property type="project" value="UniProtKB-SubCell"/>
</dbReference>
<dbReference type="GO" id="GO:0005576">
    <property type="term" value="C:extracellular region"/>
    <property type="evidence" value="ECO:0007005"/>
    <property type="project" value="MTBBASE"/>
</dbReference>
<dbReference type="Gene3D" id="1.10.287.850">
    <property type="entry name" value="HP0062-like domain"/>
    <property type="match status" value="1"/>
</dbReference>
<dbReference type="InterPro" id="IPR000084">
    <property type="entry name" value="PE-PGRS_N"/>
</dbReference>
<dbReference type="Pfam" id="PF00934">
    <property type="entry name" value="PE"/>
    <property type="match status" value="1"/>
</dbReference>
<dbReference type="SUPFAM" id="SSF140459">
    <property type="entry name" value="PE/PPE dimer-like"/>
    <property type="match status" value="1"/>
</dbReference>
<sequence>MEKMSHDPIAADIGTQVSDNALHGVTAGSTALTSVTGLVPAGADEVSAQAATAFTSEGIQLLASNASAQDQLHRAGEAVQDVARTYSQIDDGAAGVFAE</sequence>
<gene>
    <name type="primary">PE35</name>
    <name type="ordered locus">Rv3872</name>
</gene>
<proteinExistence type="evidence at protein level"/>
<comment type="function">
    <text evidence="5">Plays a major role in RD1-associated pathogenesis, and may contribute to the establishment and maintenance of M.tuberculosis infection. Together with PPE68, stimulates the secretion of IL-10 and MCP-1 from human macrophages, via the interaction with human Toll-like receptor 2 (TLR2).</text>
</comment>
<comment type="subunit">
    <text evidence="5">Interacts with PPE68. PE35/PPE68 complex interacts with human TLR2.</text>
</comment>
<comment type="interaction">
    <interactant intactId="EBI-9086211">
        <id>P9WIG7</id>
    </interactant>
    <interactant intactId="EBI-9086224">
        <id>P9WHW9</id>
        <label>PPE68</label>
    </interactant>
    <organismsDiffer>false</organismsDiffer>
    <experiments>3</experiments>
</comment>
<comment type="subcellular location">
    <subcellularLocation>
        <location evidence="4">Secreted</location>
    </subcellularLocation>
    <subcellularLocation>
        <location evidence="5">Cell surface</location>
    </subcellularLocation>
</comment>
<comment type="disruption phenotype">
    <text evidence="2">Inactivation impairs expression of EsxA (ESAT-6) and EsxB (CFP-10).</text>
</comment>
<comment type="miscellaneous">
    <text evidence="3">Could be used for serodiagnosis of both pulmonary and extra-pulmonary tuberculosis.</text>
</comment>
<comment type="similarity">
    <text evidence="6">Belongs to the mycobacterial PE family.</text>
</comment>
<evidence type="ECO:0000255" key="1"/>
<evidence type="ECO:0000269" key="2">
    <source>
    </source>
</evidence>
<evidence type="ECO:0000269" key="3">
    <source>
    </source>
</evidence>
<evidence type="ECO:0000269" key="4">
    <source>
    </source>
</evidence>
<evidence type="ECO:0000269" key="5">
    <source>
    </source>
</evidence>
<evidence type="ECO:0000305" key="6"/>
<feature type="chain" id="PRO_0000394202" description="PE family immunomodulator PE35">
    <location>
        <begin position="1"/>
        <end position="99"/>
    </location>
</feature>
<feature type="domain" description="PE" evidence="1">
    <location>
        <begin position="1"/>
        <end position="90"/>
    </location>
</feature>
<organism>
    <name type="scientific">Mycobacterium tuberculosis (strain ATCC 25618 / H37Rv)</name>
    <dbReference type="NCBI Taxonomy" id="83332"/>
    <lineage>
        <taxon>Bacteria</taxon>
        <taxon>Bacillati</taxon>
        <taxon>Actinomycetota</taxon>
        <taxon>Actinomycetes</taxon>
        <taxon>Mycobacteriales</taxon>
        <taxon>Mycobacteriaceae</taxon>
        <taxon>Mycobacterium</taxon>
        <taxon>Mycobacterium tuberculosis complex</taxon>
    </lineage>
</organism>
<protein>
    <recommendedName>
        <fullName evidence="6">PE family immunomodulator PE35</fullName>
    </recommendedName>
</protein>
<name>PE35_MYCTU</name>
<reference key="1">
    <citation type="journal article" date="1998" name="Nature">
        <title>Deciphering the biology of Mycobacterium tuberculosis from the complete genome sequence.</title>
        <authorList>
            <person name="Cole S.T."/>
            <person name="Brosch R."/>
            <person name="Parkhill J."/>
            <person name="Garnier T."/>
            <person name="Churcher C.M."/>
            <person name="Harris D.E."/>
            <person name="Gordon S.V."/>
            <person name="Eiglmeier K."/>
            <person name="Gas S."/>
            <person name="Barry C.E. III"/>
            <person name="Tekaia F."/>
            <person name="Badcock K."/>
            <person name="Basham D."/>
            <person name="Brown D."/>
            <person name="Chillingworth T."/>
            <person name="Connor R."/>
            <person name="Davies R.M."/>
            <person name="Devlin K."/>
            <person name="Feltwell T."/>
            <person name="Gentles S."/>
            <person name="Hamlin N."/>
            <person name="Holroyd S."/>
            <person name="Hornsby T."/>
            <person name="Jagels K."/>
            <person name="Krogh A."/>
            <person name="McLean J."/>
            <person name="Moule S."/>
            <person name="Murphy L.D."/>
            <person name="Oliver S."/>
            <person name="Osborne J."/>
            <person name="Quail M.A."/>
            <person name="Rajandream M.A."/>
            <person name="Rogers J."/>
            <person name="Rutter S."/>
            <person name="Seeger K."/>
            <person name="Skelton S."/>
            <person name="Squares S."/>
            <person name="Squares R."/>
            <person name="Sulston J.E."/>
            <person name="Taylor K."/>
            <person name="Whitehead S."/>
            <person name="Barrell B.G."/>
        </authorList>
    </citation>
    <scope>NUCLEOTIDE SEQUENCE [LARGE SCALE GENOMIC DNA]</scope>
    <source>
        <strain>ATCC 25618 / H37Rv</strain>
    </source>
</reference>
<reference key="2">
    <citation type="journal article" date="2005" name="Proc. Natl. Acad. Sci. U.S.A.">
        <title>Mutually dependent secretion of proteins required for mycobacterial virulence.</title>
        <authorList>
            <person name="Fortune S.M."/>
            <person name="Jaeger A."/>
            <person name="Sarracino D.A."/>
            <person name="Chase M.R."/>
            <person name="Sassetti C.M."/>
            <person name="Sherman D.R."/>
            <person name="Bloom B.R."/>
            <person name="Rubin E.J."/>
        </authorList>
    </citation>
    <scope>IDENTIFICATION BY MASS SPECTROMETRY</scope>
    <source>
        <strain>ATCC 25618 / H37Rv</strain>
    </source>
</reference>
<reference key="3">
    <citation type="journal article" date="2006" name="Infect. Immun.">
        <title>Dissection of ESAT-6 system 1 of Mycobacterium tuberculosis and impact on immunogenicity and virulence.</title>
        <authorList>
            <person name="Brodin P."/>
            <person name="Majlessi L."/>
            <person name="Marsollier L."/>
            <person name="de Jonge M.I."/>
            <person name="Bottai D."/>
            <person name="Demangel C."/>
            <person name="Hinds J."/>
            <person name="Neyrolles O."/>
            <person name="Butcher P.D."/>
            <person name="Leclerc C."/>
            <person name="Cole S.T."/>
            <person name="Brosch R."/>
        </authorList>
    </citation>
    <scope>DISRUPTION PHENOTYPE</scope>
</reference>
<reference key="4">
    <citation type="journal article" date="2007" name="Clin. Microbiol. Infect.">
        <title>The RD1-encoded antigen Rv3872 of Mycobacterium tuberculosis as a potential candidate for serodiagnosis of tuberculosis.</title>
        <authorList>
            <person name="Mukherjee P."/>
            <person name="Dutta M."/>
            <person name="Datta P."/>
            <person name="Dasgupta A."/>
            <person name="Pradhan R."/>
            <person name="Pradhan M."/>
            <person name="Kundu M."/>
            <person name="Basu J."/>
            <person name="Chakrabarti P."/>
        </authorList>
    </citation>
    <scope>IDENTIFICATION AS A POTENTIAL CANDIDATE FOR SERODIAGNOSIS</scope>
    <source>
        <strain>ATCC 25618 / H37Rv</strain>
    </source>
</reference>
<reference key="5">
    <citation type="journal article" date="2007" name="Proteomics">
        <title>Comprehensive analysis of exported proteins from Mycobacterium tuberculosis H37Rv.</title>
        <authorList>
            <person name="Malen H."/>
            <person name="Berven F.S."/>
            <person name="Fladmark K.E."/>
            <person name="Wiker H.G."/>
        </authorList>
    </citation>
    <scope>IDENTIFICATION BY MASS SPECTROMETRY</scope>
    <scope>SUBCELLULAR LOCATION</scope>
    <source>
        <strain>ATCC 27294 / TMC 102 / H37Rv</strain>
    </source>
</reference>
<reference key="6">
    <citation type="journal article" date="2014" name="FEBS J.">
        <title>An immunomodulatory role for the Mycobacterium tuberculosis region of difference 1 locus proteins PE35 (Rv3872) and PPE68 (Rv3873).</title>
        <authorList>
            <person name="Tiwari B."/>
            <person name="Soory A."/>
            <person name="Raghunand T.R."/>
        </authorList>
    </citation>
    <scope>FUNCTION</scope>
    <scope>INTERACTION WITH PPE68 AND TLR2</scope>
    <scope>SUBCELLULAR LOCATION</scope>
    <source>
        <strain>H37Rv</strain>
    </source>
</reference>